<feature type="chain" id="PRO_0000194975" description="DNA damage tolerance protein RHC31">
    <location>
        <begin position="1"/>
        <end position="347"/>
    </location>
</feature>
<feature type="modified residue" description="Phosphoserine" evidence="3">
    <location>
        <position position="9"/>
    </location>
</feature>
<feature type="cross-link" description="Glycyl lysine isopeptide (Lys-Gly) (interchain with G-Cter in SUMO)" evidence="2">
    <location>
        <position position="35"/>
    </location>
</feature>
<keyword id="KW-0227">DNA damage</keyword>
<keyword id="KW-1017">Isopeptide bond</keyword>
<keyword id="KW-0597">Phosphoprotein</keyword>
<keyword id="KW-1185">Reference proteome</keyword>
<keyword id="KW-0832">Ubl conjugation</keyword>
<accession>Q06624</accession>
<accession>D6W4I0</accession>
<sequence length="347" mass="39273">MDMKVEKLSEDEIALYDRQIRLWGMTAQANMRSAKVLLINLGAIGSEITKSIVLSGIGHLTILDGHMVTEEDLGSQFFIGSEDVGQWKIDATKERIQDLNPRIELNFDKQDLQEKDEEFFQQFDLVVATEMQIDEAIKINTLTRKLNIPLYVAGSNGLFAYVFIDLIEFISEDEKLQSVRPTTVGPISSNRSIIEVTTRKDEEDEKKTYERIKTKNCYRPLNEVLSTATLKEKMTQRQLKRVTSILPLTLSLLQYGLNQKGKAISFEQMKRDAAVWCENLGVPATVVKDDYIQQFIKQKGIEFAPVAAIIGGAVAQDVINILGKRLSPLNNFIVFDGITLDMPLFEF</sequence>
<organism>
    <name type="scientific">Saccharomyces cerevisiae (strain ATCC 204508 / S288c)</name>
    <name type="common">Baker's yeast</name>
    <dbReference type="NCBI Taxonomy" id="559292"/>
    <lineage>
        <taxon>Eukaryota</taxon>
        <taxon>Fungi</taxon>
        <taxon>Dikarya</taxon>
        <taxon>Ascomycota</taxon>
        <taxon>Saccharomycotina</taxon>
        <taxon>Saccharomycetes</taxon>
        <taxon>Saccharomycetales</taxon>
        <taxon>Saccharomycetaceae</taxon>
        <taxon>Saccharomyces</taxon>
    </lineage>
</organism>
<name>RHC31_YEAST</name>
<evidence type="ECO:0000269" key="1">
    <source>
    </source>
</evidence>
<evidence type="ECO:0000269" key="2">
    <source>
    </source>
</evidence>
<evidence type="ECO:0007744" key="3">
    <source>
    </source>
</evidence>
<gene>
    <name type="primary">AOS1</name>
    <name type="synonym">RHC31</name>
    <name type="ordered locus">YPR180W</name>
    <name type="ORF">P9705.5</name>
</gene>
<reference key="1">
    <citation type="journal article" date="1997" name="Nature">
        <title>The nucleotide sequence of Saccharomyces cerevisiae chromosome XVI.</title>
        <authorList>
            <person name="Bussey H."/>
            <person name="Storms R.K."/>
            <person name="Ahmed A."/>
            <person name="Albermann K."/>
            <person name="Allen E."/>
            <person name="Ansorge W."/>
            <person name="Araujo R."/>
            <person name="Aparicio A."/>
            <person name="Barrell B.G."/>
            <person name="Badcock K."/>
            <person name="Benes V."/>
            <person name="Botstein D."/>
            <person name="Bowman S."/>
            <person name="Brueckner M."/>
            <person name="Carpenter J."/>
            <person name="Cherry J.M."/>
            <person name="Chung E."/>
            <person name="Churcher C.M."/>
            <person name="Coster F."/>
            <person name="Davis K."/>
            <person name="Davis R.W."/>
            <person name="Dietrich F.S."/>
            <person name="Delius H."/>
            <person name="DiPaolo T."/>
            <person name="Dubois E."/>
            <person name="Duesterhoeft A."/>
            <person name="Duncan M."/>
            <person name="Floeth M."/>
            <person name="Fortin N."/>
            <person name="Friesen J.D."/>
            <person name="Fritz C."/>
            <person name="Goffeau A."/>
            <person name="Hall J."/>
            <person name="Hebling U."/>
            <person name="Heumann K."/>
            <person name="Hilbert H."/>
            <person name="Hillier L.W."/>
            <person name="Hunicke-Smith S."/>
            <person name="Hyman R.W."/>
            <person name="Johnston M."/>
            <person name="Kalman S."/>
            <person name="Kleine K."/>
            <person name="Komp C."/>
            <person name="Kurdi O."/>
            <person name="Lashkari D."/>
            <person name="Lew H."/>
            <person name="Lin A."/>
            <person name="Lin D."/>
            <person name="Louis E.J."/>
            <person name="Marathe R."/>
            <person name="Messenguy F."/>
            <person name="Mewes H.-W."/>
            <person name="Mirtipati S."/>
            <person name="Moestl D."/>
            <person name="Mueller-Auer S."/>
            <person name="Namath A."/>
            <person name="Nentwich U."/>
            <person name="Oefner P."/>
            <person name="Pearson D."/>
            <person name="Petel F.X."/>
            <person name="Pohl T.M."/>
            <person name="Purnelle B."/>
            <person name="Rajandream M.A."/>
            <person name="Rechmann S."/>
            <person name="Rieger M."/>
            <person name="Riles L."/>
            <person name="Roberts D."/>
            <person name="Schaefer M."/>
            <person name="Scharfe M."/>
            <person name="Scherens B."/>
            <person name="Schramm S."/>
            <person name="Schroeder M."/>
            <person name="Sdicu A.-M."/>
            <person name="Tettelin H."/>
            <person name="Urrestarazu L.A."/>
            <person name="Ushinsky S."/>
            <person name="Vierendeels F."/>
            <person name="Vissers S."/>
            <person name="Voss H."/>
            <person name="Walsh S.V."/>
            <person name="Wambutt R."/>
            <person name="Wang Y."/>
            <person name="Wedler E."/>
            <person name="Wedler H."/>
            <person name="Winnett E."/>
            <person name="Zhong W.-W."/>
            <person name="Zollner A."/>
            <person name="Vo D.H."/>
            <person name="Hani J."/>
        </authorList>
    </citation>
    <scope>NUCLEOTIDE SEQUENCE [LARGE SCALE GENOMIC DNA]</scope>
    <source>
        <strain>ATCC 204508 / S288c</strain>
    </source>
</reference>
<reference key="2">
    <citation type="journal article" date="2014" name="G3 (Bethesda)">
        <title>The reference genome sequence of Saccharomyces cerevisiae: Then and now.</title>
        <authorList>
            <person name="Engel S.R."/>
            <person name="Dietrich F.S."/>
            <person name="Fisk D.G."/>
            <person name="Binkley G."/>
            <person name="Balakrishnan R."/>
            <person name="Costanzo M.C."/>
            <person name="Dwight S.S."/>
            <person name="Hitz B.C."/>
            <person name="Karra K."/>
            <person name="Nash R.S."/>
            <person name="Weng S."/>
            <person name="Wong E.D."/>
            <person name="Lloyd P."/>
            <person name="Skrzypek M.S."/>
            <person name="Miyasato S.R."/>
            <person name="Simison M."/>
            <person name="Cherry J.M."/>
        </authorList>
    </citation>
    <scope>GENOME REANNOTATION</scope>
    <source>
        <strain>ATCC 204508 / S288c</strain>
    </source>
</reference>
<reference key="3">
    <citation type="journal article" date="1997" name="Nucleic Acids Res.">
        <title>Characterisation of Schizosaccharomyces pombe rad31, a UBA-related gene required for DNA damage tolerance.</title>
        <authorList>
            <person name="Shayeghi M."/>
            <person name="Doe C.L."/>
            <person name="Tavassoli M."/>
            <person name="Watts F.Z."/>
        </authorList>
    </citation>
    <scope>CHARACTERIZATION</scope>
</reference>
<reference key="4">
    <citation type="journal article" date="2003" name="Nature">
        <title>Global analysis of protein expression in yeast.</title>
        <authorList>
            <person name="Ghaemmaghami S."/>
            <person name="Huh W.-K."/>
            <person name="Bower K."/>
            <person name="Howson R.W."/>
            <person name="Belle A."/>
            <person name="Dephoure N."/>
            <person name="O'Shea E.K."/>
            <person name="Weissman J.S."/>
        </authorList>
    </citation>
    <scope>LEVEL OF PROTEIN EXPRESSION [LARGE SCALE ANALYSIS]</scope>
</reference>
<reference key="5">
    <citation type="journal article" date="2004" name="J. Biol. Chem.">
        <title>Global analyses of sumoylated proteins in Saccharomyces cerevisiae. Induction of protein sumoylation by cellular stresses.</title>
        <authorList>
            <person name="Zhou W."/>
            <person name="Ryan J.J."/>
            <person name="Zhou H."/>
        </authorList>
    </citation>
    <scope>SUMOYLATION [LARGE SCALE ANALYSIS] AT LYS-35</scope>
    <scope>IDENTIFICATION BY MASS SPECTROMETRY</scope>
</reference>
<reference key="6">
    <citation type="journal article" date="2008" name="Mol. Cell. Proteomics">
        <title>A multidimensional chromatography technology for in-depth phosphoproteome analysis.</title>
        <authorList>
            <person name="Albuquerque C.P."/>
            <person name="Smolka M.B."/>
            <person name="Payne S.H."/>
            <person name="Bafna V."/>
            <person name="Eng J."/>
            <person name="Zhou H."/>
        </authorList>
    </citation>
    <scope>PHOSPHORYLATION [LARGE SCALE ANALYSIS] AT SER-9</scope>
    <scope>IDENTIFICATION BY MASS SPECTROMETRY [LARGE SCALE ANALYSIS]</scope>
</reference>
<reference key="7">
    <citation type="journal article" date="2012" name="Proc. Natl. Acad. Sci. U.S.A.">
        <title>N-terminal acetylome analyses and functional insights of the N-terminal acetyltransferase NatB.</title>
        <authorList>
            <person name="Van Damme P."/>
            <person name="Lasa M."/>
            <person name="Polevoda B."/>
            <person name="Gazquez C."/>
            <person name="Elosegui-Artola A."/>
            <person name="Kim D.S."/>
            <person name="De Juan-Pardo E."/>
            <person name="Demeyer K."/>
            <person name="Hole K."/>
            <person name="Larrea E."/>
            <person name="Timmerman E."/>
            <person name="Prieto J."/>
            <person name="Arnesen T."/>
            <person name="Sherman F."/>
            <person name="Gevaert K."/>
            <person name="Aldabe R."/>
        </authorList>
    </citation>
    <scope>IDENTIFICATION BY MASS SPECTROMETRY [LARGE SCALE ANALYSIS]</scope>
</reference>
<protein>
    <recommendedName>
        <fullName>DNA damage tolerance protein RHC31</fullName>
    </recommendedName>
    <alternativeName>
        <fullName>RAD31 homolog</fullName>
    </alternativeName>
</protein>
<comment type="function">
    <text>Could be involved in a ubiquitin-related process important for DNA damage tolerance.</text>
</comment>
<comment type="interaction">
    <interactant intactId="EBI-15107">
        <id>Q06624</id>
    </interactant>
    <interactant intactId="EBI-19710">
        <id>P52488</id>
        <label>UBA2</label>
    </interactant>
    <organismsDiffer>false</organismsDiffer>
    <experiments>4</experiments>
</comment>
<comment type="miscellaneous">
    <text evidence="1">Present with 7430 molecules/cell in log phase SD medium.</text>
</comment>
<dbReference type="EMBL" id="U25842">
    <property type="protein sequence ID" value="AAB68113.1"/>
    <property type="molecule type" value="Genomic_DNA"/>
</dbReference>
<dbReference type="EMBL" id="BK006949">
    <property type="protein sequence ID" value="DAA11596.1"/>
    <property type="molecule type" value="Genomic_DNA"/>
</dbReference>
<dbReference type="PIR" id="S59837">
    <property type="entry name" value="S59837"/>
</dbReference>
<dbReference type="RefSeq" id="NP_015506.1">
    <property type="nucleotide sequence ID" value="NM_001184277.1"/>
</dbReference>
<dbReference type="SMR" id="Q06624"/>
<dbReference type="BioGRID" id="36352">
    <property type="interactions" value="227"/>
</dbReference>
<dbReference type="ComplexPortal" id="CPX-3238">
    <property type="entry name" value="SUMO activating enzyme complex"/>
</dbReference>
<dbReference type="DIP" id="DIP-2338N"/>
<dbReference type="FunCoup" id="Q06624">
    <property type="interactions" value="1414"/>
</dbReference>
<dbReference type="IntAct" id="Q06624">
    <property type="interactions" value="18"/>
</dbReference>
<dbReference type="MINT" id="Q06624"/>
<dbReference type="STRING" id="4932.YPR180W"/>
<dbReference type="iPTMnet" id="Q06624"/>
<dbReference type="PaxDb" id="4932-YPR180W"/>
<dbReference type="PeptideAtlas" id="Q06624"/>
<dbReference type="EnsemblFungi" id="YPR180W_mRNA">
    <property type="protein sequence ID" value="YPR180W"/>
    <property type="gene ID" value="YPR180W"/>
</dbReference>
<dbReference type="GeneID" id="856310"/>
<dbReference type="KEGG" id="sce:YPR180W"/>
<dbReference type="AGR" id="SGD:S000006384"/>
<dbReference type="SGD" id="S000006384">
    <property type="gene designation" value="AOS1"/>
</dbReference>
<dbReference type="VEuPathDB" id="FungiDB:YPR180W"/>
<dbReference type="eggNOG" id="KOG2014">
    <property type="taxonomic scope" value="Eukaryota"/>
</dbReference>
<dbReference type="GeneTree" id="ENSGT00960000189260"/>
<dbReference type="HOGENOM" id="CLU_002556_4_1_1"/>
<dbReference type="InParanoid" id="Q06624"/>
<dbReference type="OMA" id="EFFGQFD"/>
<dbReference type="OrthoDB" id="1708823at2759"/>
<dbReference type="BioCyc" id="YEAST:G3O-34305-MONOMER"/>
<dbReference type="Reactome" id="R-SCE-3065676">
    <property type="pathway name" value="SUMO is conjugated to E1 (UBA2:SAE1)"/>
</dbReference>
<dbReference type="Reactome" id="R-SCE-3065678">
    <property type="pathway name" value="SUMO is transferred from E1 to E2 (UBE2I, UBC9)"/>
</dbReference>
<dbReference type="BioGRID-ORCS" id="856310">
    <property type="hits" value="0 hits in 10 CRISPR screens"/>
</dbReference>
<dbReference type="PRO" id="PR:Q06624"/>
<dbReference type="Proteomes" id="UP000002311">
    <property type="component" value="Chromosome XVI"/>
</dbReference>
<dbReference type="RNAct" id="Q06624">
    <property type="molecule type" value="protein"/>
</dbReference>
<dbReference type="GO" id="GO:0005737">
    <property type="term" value="C:cytoplasm"/>
    <property type="evidence" value="ECO:0000318"/>
    <property type="project" value="GO_Central"/>
</dbReference>
<dbReference type="GO" id="GO:0005829">
    <property type="term" value="C:cytosol"/>
    <property type="evidence" value="ECO:0000314"/>
    <property type="project" value="SGD"/>
</dbReference>
<dbReference type="GO" id="GO:0005634">
    <property type="term" value="C:nucleus"/>
    <property type="evidence" value="ECO:0000314"/>
    <property type="project" value="SGD"/>
</dbReference>
<dbReference type="GO" id="GO:0031510">
    <property type="term" value="C:SUMO activating enzyme complex"/>
    <property type="evidence" value="ECO:0000353"/>
    <property type="project" value="ComplexPortal"/>
</dbReference>
<dbReference type="GO" id="GO:0008641">
    <property type="term" value="F:ubiquitin-like modifier activating enzyme activity"/>
    <property type="evidence" value="ECO:0007669"/>
    <property type="project" value="InterPro"/>
</dbReference>
<dbReference type="GO" id="GO:0006974">
    <property type="term" value="P:DNA damage response"/>
    <property type="evidence" value="ECO:0007669"/>
    <property type="project" value="UniProtKB-KW"/>
</dbReference>
<dbReference type="GO" id="GO:0016925">
    <property type="term" value="P:protein sumoylation"/>
    <property type="evidence" value="ECO:0000314"/>
    <property type="project" value="SGD"/>
</dbReference>
<dbReference type="CDD" id="cd01492">
    <property type="entry name" value="Aos1_SUMO"/>
    <property type="match status" value="1"/>
</dbReference>
<dbReference type="FunFam" id="3.40.50.720:FF:000678">
    <property type="entry name" value="Aos1p"/>
    <property type="match status" value="1"/>
</dbReference>
<dbReference type="Gene3D" id="3.40.50.720">
    <property type="entry name" value="NAD(P)-binding Rossmann-like Domain"/>
    <property type="match status" value="1"/>
</dbReference>
<dbReference type="InterPro" id="IPR045886">
    <property type="entry name" value="ThiF/MoeB/HesA"/>
</dbReference>
<dbReference type="InterPro" id="IPR000594">
    <property type="entry name" value="ThiF_NAD_FAD-bd"/>
</dbReference>
<dbReference type="InterPro" id="IPR035985">
    <property type="entry name" value="Ubiquitin-activating_enz"/>
</dbReference>
<dbReference type="PANTHER" id="PTHR10953:SF162">
    <property type="entry name" value="SUMO-ACTIVATING ENZYME SUBUNIT 1"/>
    <property type="match status" value="1"/>
</dbReference>
<dbReference type="PANTHER" id="PTHR10953">
    <property type="entry name" value="UBIQUITIN-ACTIVATING ENZYME E1"/>
    <property type="match status" value="1"/>
</dbReference>
<dbReference type="Pfam" id="PF00899">
    <property type="entry name" value="ThiF"/>
    <property type="match status" value="1"/>
</dbReference>
<dbReference type="SUPFAM" id="SSF69572">
    <property type="entry name" value="Activating enzymes of the ubiquitin-like proteins"/>
    <property type="match status" value="1"/>
</dbReference>
<proteinExistence type="evidence at protein level"/>